<feature type="chain" id="PRO_0000375898" description="Uncharacterized ABC transporter ATP-binding protein YvrA">
    <location>
        <begin position="1"/>
        <end position="442"/>
    </location>
</feature>
<feature type="domain" description="ABC transporter" evidence="2">
    <location>
        <begin position="1"/>
        <end position="238"/>
    </location>
</feature>
<feature type="binding site" evidence="2">
    <location>
        <begin position="33"/>
        <end position="40"/>
    </location>
    <ligand>
        <name>ATP</name>
        <dbReference type="ChEBI" id="CHEBI:30616"/>
    </ligand>
</feature>
<accession>O34631</accession>
<accession>Q7B2J9</accession>
<sequence>MKAEGLSGGYGDSRLINNVSLTVEKGEFLGILGPNGSGKTTLLHLLTGTLPAKKGRVYLAGKLLADYKPKELAQIMAVLPQKMDQAFTFTVEETVAFGRYPFQTGLFRQQTEKGEAIVQEAMEQTGVADFAQKPIRELSGGEQQRVYLAQALAQQPRILFLDEPTNFLDLAYQKDLLDLIKRLTRESGLAAVSVFHDLNTASLYCDGLMFMKNGTAGPKQKPEYAVTEQSIKAVYDTDVTALVHQSSPKPMIVIQPEKDSVKRQSIPFEALLQAGRDDILLQTEIPLRTLSSTPIGAGFSWSRTLIHKRLPDQPDPIEGLTACLSESGFQLQETCAMASSERLDRFVYRTYEDGELSVFICVQTGFSIWILINGYAADQFFIKALMAAEAERTKVLGDGGGTGDILIAATQTQQSENIEQRLNQLIKKGTAECIKEAAELFE</sequence>
<proteinExistence type="inferred from homology"/>
<protein>
    <recommendedName>
        <fullName>Uncharacterized ABC transporter ATP-binding protein YvrA</fullName>
        <ecNumber>7.-.-.-</ecNumber>
    </recommendedName>
</protein>
<keyword id="KW-0067">ATP-binding</keyword>
<keyword id="KW-0547">Nucleotide-binding</keyword>
<keyword id="KW-1185">Reference proteome</keyword>
<keyword id="KW-1278">Translocase</keyword>
<keyword id="KW-0813">Transport</keyword>
<reference key="1">
    <citation type="journal article" date="1998" name="Microbiology">
        <title>The yvsA-yvqA (293 degrees - 289 degrees) region of the Bacillus subtilis chromosome containing genes involved in metal ion uptake and a putative sigma factor.</title>
        <authorList>
            <person name="Wipat A."/>
            <person name="Brignell C.S."/>
            <person name="Guy J.B."/>
            <person name="Rose M."/>
            <person name="Emmerson P.T."/>
            <person name="Harwood C.R."/>
        </authorList>
    </citation>
    <scope>NUCLEOTIDE SEQUENCE [GENOMIC DNA]</scope>
    <source>
        <strain>168</strain>
    </source>
</reference>
<reference key="2">
    <citation type="journal article" date="1997" name="Nature">
        <title>The complete genome sequence of the Gram-positive bacterium Bacillus subtilis.</title>
        <authorList>
            <person name="Kunst F."/>
            <person name="Ogasawara N."/>
            <person name="Moszer I."/>
            <person name="Albertini A.M."/>
            <person name="Alloni G."/>
            <person name="Azevedo V."/>
            <person name="Bertero M.G."/>
            <person name="Bessieres P."/>
            <person name="Bolotin A."/>
            <person name="Borchert S."/>
            <person name="Borriss R."/>
            <person name="Boursier L."/>
            <person name="Brans A."/>
            <person name="Braun M."/>
            <person name="Brignell S.C."/>
            <person name="Bron S."/>
            <person name="Brouillet S."/>
            <person name="Bruschi C.V."/>
            <person name="Caldwell B."/>
            <person name="Capuano V."/>
            <person name="Carter N.M."/>
            <person name="Choi S.-K."/>
            <person name="Codani J.-J."/>
            <person name="Connerton I.F."/>
            <person name="Cummings N.J."/>
            <person name="Daniel R.A."/>
            <person name="Denizot F."/>
            <person name="Devine K.M."/>
            <person name="Duesterhoeft A."/>
            <person name="Ehrlich S.D."/>
            <person name="Emmerson P.T."/>
            <person name="Entian K.-D."/>
            <person name="Errington J."/>
            <person name="Fabret C."/>
            <person name="Ferrari E."/>
            <person name="Foulger D."/>
            <person name="Fritz C."/>
            <person name="Fujita M."/>
            <person name="Fujita Y."/>
            <person name="Fuma S."/>
            <person name="Galizzi A."/>
            <person name="Galleron N."/>
            <person name="Ghim S.-Y."/>
            <person name="Glaser P."/>
            <person name="Goffeau A."/>
            <person name="Golightly E.J."/>
            <person name="Grandi G."/>
            <person name="Guiseppi G."/>
            <person name="Guy B.J."/>
            <person name="Haga K."/>
            <person name="Haiech J."/>
            <person name="Harwood C.R."/>
            <person name="Henaut A."/>
            <person name="Hilbert H."/>
            <person name="Holsappel S."/>
            <person name="Hosono S."/>
            <person name="Hullo M.-F."/>
            <person name="Itaya M."/>
            <person name="Jones L.-M."/>
            <person name="Joris B."/>
            <person name="Karamata D."/>
            <person name="Kasahara Y."/>
            <person name="Klaerr-Blanchard M."/>
            <person name="Klein C."/>
            <person name="Kobayashi Y."/>
            <person name="Koetter P."/>
            <person name="Koningstein G."/>
            <person name="Krogh S."/>
            <person name="Kumano M."/>
            <person name="Kurita K."/>
            <person name="Lapidus A."/>
            <person name="Lardinois S."/>
            <person name="Lauber J."/>
            <person name="Lazarevic V."/>
            <person name="Lee S.-M."/>
            <person name="Levine A."/>
            <person name="Liu H."/>
            <person name="Masuda S."/>
            <person name="Mauel C."/>
            <person name="Medigue C."/>
            <person name="Medina N."/>
            <person name="Mellado R.P."/>
            <person name="Mizuno M."/>
            <person name="Moestl D."/>
            <person name="Nakai S."/>
            <person name="Noback M."/>
            <person name="Noone D."/>
            <person name="O'Reilly M."/>
            <person name="Ogawa K."/>
            <person name="Ogiwara A."/>
            <person name="Oudega B."/>
            <person name="Park S.-H."/>
            <person name="Parro V."/>
            <person name="Pohl T.M."/>
            <person name="Portetelle D."/>
            <person name="Porwollik S."/>
            <person name="Prescott A.M."/>
            <person name="Presecan E."/>
            <person name="Pujic P."/>
            <person name="Purnelle B."/>
            <person name="Rapoport G."/>
            <person name="Rey M."/>
            <person name="Reynolds S."/>
            <person name="Rieger M."/>
            <person name="Rivolta C."/>
            <person name="Rocha E."/>
            <person name="Roche B."/>
            <person name="Rose M."/>
            <person name="Sadaie Y."/>
            <person name="Sato T."/>
            <person name="Scanlan E."/>
            <person name="Schleich S."/>
            <person name="Schroeter R."/>
            <person name="Scoffone F."/>
            <person name="Sekiguchi J."/>
            <person name="Sekowska A."/>
            <person name="Seror S.J."/>
            <person name="Serror P."/>
            <person name="Shin B.-S."/>
            <person name="Soldo B."/>
            <person name="Sorokin A."/>
            <person name="Tacconi E."/>
            <person name="Takagi T."/>
            <person name="Takahashi H."/>
            <person name="Takemaru K."/>
            <person name="Takeuchi M."/>
            <person name="Tamakoshi A."/>
            <person name="Tanaka T."/>
            <person name="Terpstra P."/>
            <person name="Tognoni A."/>
            <person name="Tosato V."/>
            <person name="Uchiyama S."/>
            <person name="Vandenbol M."/>
            <person name="Vannier F."/>
            <person name="Vassarotti A."/>
            <person name="Viari A."/>
            <person name="Wambutt R."/>
            <person name="Wedler E."/>
            <person name="Wedler H."/>
            <person name="Weitzenegger T."/>
            <person name="Winters P."/>
            <person name="Wipat A."/>
            <person name="Yamamoto H."/>
            <person name="Yamane K."/>
            <person name="Yasumoto K."/>
            <person name="Yata K."/>
            <person name="Yoshida K."/>
            <person name="Yoshikawa H.-F."/>
            <person name="Zumstein E."/>
            <person name="Yoshikawa H."/>
            <person name="Danchin A."/>
        </authorList>
    </citation>
    <scope>NUCLEOTIDE SEQUENCE [LARGE SCALE GENOMIC DNA]</scope>
    <source>
        <strain>168</strain>
    </source>
</reference>
<evidence type="ECO:0000250" key="1"/>
<evidence type="ECO:0000255" key="2">
    <source>
        <dbReference type="PROSITE-ProRule" id="PRU00434"/>
    </source>
</evidence>
<evidence type="ECO:0000305" key="3"/>
<name>YVRA_BACSU</name>
<dbReference type="EC" id="7.-.-.-"/>
<dbReference type="EMBL" id="AJ223978">
    <property type="protein sequence ID" value="CAA11737.1"/>
    <property type="molecule type" value="Genomic_DNA"/>
</dbReference>
<dbReference type="EMBL" id="AL009126">
    <property type="protein sequence ID" value="CAB15306.1"/>
    <property type="molecule type" value="Genomic_DNA"/>
</dbReference>
<dbReference type="PIR" id="E70046">
    <property type="entry name" value="E70046"/>
</dbReference>
<dbReference type="RefSeq" id="NP_391196.1">
    <property type="nucleotide sequence ID" value="NC_000964.3"/>
</dbReference>
<dbReference type="RefSeq" id="WP_010886611.1">
    <property type="nucleotide sequence ID" value="NZ_OZ025638.1"/>
</dbReference>
<dbReference type="SMR" id="O34631"/>
<dbReference type="FunCoup" id="O34631">
    <property type="interactions" value="183"/>
</dbReference>
<dbReference type="STRING" id="224308.BSU33160"/>
<dbReference type="PaxDb" id="224308-BSU33160"/>
<dbReference type="DNASU" id="935968"/>
<dbReference type="EnsemblBacteria" id="CAB15306">
    <property type="protein sequence ID" value="CAB15306"/>
    <property type="gene ID" value="BSU_33160"/>
</dbReference>
<dbReference type="GeneID" id="935968"/>
<dbReference type="KEGG" id="bsu:BSU33160"/>
<dbReference type="PATRIC" id="fig|224308.43.peg.3474"/>
<dbReference type="eggNOG" id="COG1120">
    <property type="taxonomic scope" value="Bacteria"/>
</dbReference>
<dbReference type="InParanoid" id="O34631"/>
<dbReference type="OrthoDB" id="9787851at2"/>
<dbReference type="PhylomeDB" id="O34631"/>
<dbReference type="BioCyc" id="BSUB:BSU33160-MONOMER"/>
<dbReference type="Proteomes" id="UP000001570">
    <property type="component" value="Chromosome"/>
</dbReference>
<dbReference type="GO" id="GO:0005524">
    <property type="term" value="F:ATP binding"/>
    <property type="evidence" value="ECO:0007669"/>
    <property type="project" value="UniProtKB-KW"/>
</dbReference>
<dbReference type="GO" id="GO:0016887">
    <property type="term" value="F:ATP hydrolysis activity"/>
    <property type="evidence" value="ECO:0007669"/>
    <property type="project" value="InterPro"/>
</dbReference>
<dbReference type="CDD" id="cd03214">
    <property type="entry name" value="ABC_Iron-Siderophores_B12_Hemin"/>
    <property type="match status" value="1"/>
</dbReference>
<dbReference type="FunFam" id="3.40.50.300:FF:000134">
    <property type="entry name" value="Iron-enterobactin ABC transporter ATP-binding protein"/>
    <property type="match status" value="1"/>
</dbReference>
<dbReference type="Gene3D" id="3.40.50.300">
    <property type="entry name" value="P-loop containing nucleotide triphosphate hydrolases"/>
    <property type="match status" value="1"/>
</dbReference>
<dbReference type="InterPro" id="IPR003593">
    <property type="entry name" value="AAA+_ATPase"/>
</dbReference>
<dbReference type="InterPro" id="IPR003439">
    <property type="entry name" value="ABC_transporter-like_ATP-bd"/>
</dbReference>
<dbReference type="InterPro" id="IPR027417">
    <property type="entry name" value="P-loop_NTPase"/>
</dbReference>
<dbReference type="PANTHER" id="PTHR42794">
    <property type="entry name" value="HEMIN IMPORT ATP-BINDING PROTEIN HMUV"/>
    <property type="match status" value="1"/>
</dbReference>
<dbReference type="PANTHER" id="PTHR42794:SF1">
    <property type="entry name" value="HEMIN IMPORT ATP-BINDING PROTEIN HMUV"/>
    <property type="match status" value="1"/>
</dbReference>
<dbReference type="Pfam" id="PF00005">
    <property type="entry name" value="ABC_tran"/>
    <property type="match status" value="1"/>
</dbReference>
<dbReference type="SMART" id="SM00382">
    <property type="entry name" value="AAA"/>
    <property type="match status" value="1"/>
</dbReference>
<dbReference type="SUPFAM" id="SSF52540">
    <property type="entry name" value="P-loop containing nucleoside triphosphate hydrolases"/>
    <property type="match status" value="1"/>
</dbReference>
<dbReference type="PROSITE" id="PS50893">
    <property type="entry name" value="ABC_TRANSPORTER_2"/>
    <property type="match status" value="1"/>
</dbReference>
<organism>
    <name type="scientific">Bacillus subtilis (strain 168)</name>
    <dbReference type="NCBI Taxonomy" id="224308"/>
    <lineage>
        <taxon>Bacteria</taxon>
        <taxon>Bacillati</taxon>
        <taxon>Bacillota</taxon>
        <taxon>Bacilli</taxon>
        <taxon>Bacillales</taxon>
        <taxon>Bacillaceae</taxon>
        <taxon>Bacillus</taxon>
    </lineage>
</organism>
<gene>
    <name type="primary">yvrA</name>
    <name type="ordered locus">BSU33160</name>
</gene>
<comment type="function">
    <text evidence="1">Probably part of an ABC transporter complex. Probably responsible for energy coupling to the transport system (By similarity).</text>
</comment>
<comment type="subunit">
    <text evidence="3">The complex is composed of two ATP-binding proteins (YvrA), two transmembrane proteins (YvrB) and a solute-binding protein (YvrC).</text>
</comment>
<comment type="similarity">
    <text evidence="3">Belongs to the ABC transporter superfamily.</text>
</comment>